<name>RHAR_ECOLI</name>
<keyword id="KW-0002">3D-structure</keyword>
<keyword id="KW-0010">Activator</keyword>
<keyword id="KW-0963">Cytoplasm</keyword>
<keyword id="KW-0238">DNA-binding</keyword>
<keyword id="KW-1185">Reference proteome</keyword>
<keyword id="KW-0677">Repeat</keyword>
<keyword id="KW-0684">Rhamnose metabolism</keyword>
<keyword id="KW-0804">Transcription</keyword>
<keyword id="KW-0805">Transcription regulation</keyword>
<dbReference type="EMBL" id="X06058">
    <property type="protein sequence ID" value="CAA29453.1"/>
    <property type="status" value="ALT_INIT"/>
    <property type="molecule type" value="Genomic_DNA"/>
</dbReference>
<dbReference type="EMBL" id="L19201">
    <property type="protein sequence ID" value="AAB03039.1"/>
    <property type="status" value="ALT_INIT"/>
    <property type="molecule type" value="Genomic_DNA"/>
</dbReference>
<dbReference type="EMBL" id="U00096">
    <property type="protein sequence ID" value="AAC76888.2"/>
    <property type="molecule type" value="Genomic_DNA"/>
</dbReference>
<dbReference type="EMBL" id="AP009048">
    <property type="protein sequence ID" value="BAE77403.1"/>
    <property type="status" value="ALT_INIT"/>
    <property type="molecule type" value="Genomic_DNA"/>
</dbReference>
<dbReference type="EMBL" id="X60699">
    <property type="protein sequence ID" value="CAA43110.1"/>
    <property type="molecule type" value="Genomic_DNA"/>
</dbReference>
<dbReference type="EMBL" id="M85158">
    <property type="protein sequence ID" value="AAA24530.1"/>
    <property type="status" value="ALT_SEQ"/>
    <property type="molecule type" value="Genomic_DNA"/>
</dbReference>
<dbReference type="PIR" id="S40850">
    <property type="entry name" value="S40850"/>
</dbReference>
<dbReference type="RefSeq" id="NP_418342.2">
    <property type="nucleotide sequence ID" value="NC_000913.3"/>
</dbReference>
<dbReference type="RefSeq" id="WP_001336056.1">
    <property type="nucleotide sequence ID" value="NZ_SSZK01000014.1"/>
</dbReference>
<dbReference type="PDB" id="5U93">
    <property type="method" value="X-ray"/>
    <property type="resolution" value="2.00 A"/>
    <property type="chains" value="A/B=1-172"/>
</dbReference>
<dbReference type="PDB" id="5U9E">
    <property type="method" value="X-ray"/>
    <property type="resolution" value="2.02 A"/>
    <property type="chains" value="A/B=3-165"/>
</dbReference>
<dbReference type="PDBsum" id="5U93"/>
<dbReference type="PDBsum" id="5U9E"/>
<dbReference type="SMR" id="P09378"/>
<dbReference type="BioGRID" id="4263058">
    <property type="interactions" value="167"/>
</dbReference>
<dbReference type="BioGRID" id="852693">
    <property type="interactions" value="3"/>
</dbReference>
<dbReference type="DIP" id="DIP-10693N"/>
<dbReference type="FunCoup" id="P09378">
    <property type="interactions" value="174"/>
</dbReference>
<dbReference type="IntAct" id="P09378">
    <property type="interactions" value="9"/>
</dbReference>
<dbReference type="STRING" id="511145.b3906"/>
<dbReference type="PaxDb" id="511145-b3906"/>
<dbReference type="EnsemblBacteria" id="AAC76888">
    <property type="protein sequence ID" value="AAC76888"/>
    <property type="gene ID" value="b3906"/>
</dbReference>
<dbReference type="GeneID" id="948396"/>
<dbReference type="KEGG" id="ecj:JW3877"/>
<dbReference type="KEGG" id="eco:b3906"/>
<dbReference type="KEGG" id="ecoc:C3026_21120"/>
<dbReference type="PATRIC" id="fig|511145.12.peg.4022"/>
<dbReference type="EchoBASE" id="EB0835"/>
<dbReference type="eggNOG" id="COG1917">
    <property type="taxonomic scope" value="Bacteria"/>
</dbReference>
<dbReference type="eggNOG" id="COG4977">
    <property type="taxonomic scope" value="Bacteria"/>
</dbReference>
<dbReference type="HOGENOM" id="CLU_000445_88_5_6"/>
<dbReference type="InParanoid" id="P09378"/>
<dbReference type="OMA" id="ECGFDDS"/>
<dbReference type="PhylomeDB" id="P09378"/>
<dbReference type="BioCyc" id="EcoCyc:PD00222"/>
<dbReference type="PRO" id="PR:P09378"/>
<dbReference type="Proteomes" id="UP000000625">
    <property type="component" value="Chromosome"/>
</dbReference>
<dbReference type="GO" id="GO:0005737">
    <property type="term" value="C:cytoplasm"/>
    <property type="evidence" value="ECO:0007669"/>
    <property type="project" value="UniProtKB-SubCell"/>
</dbReference>
<dbReference type="GO" id="GO:0003700">
    <property type="term" value="F:DNA-binding transcription factor activity"/>
    <property type="evidence" value="ECO:0007669"/>
    <property type="project" value="UniProtKB-UniRule"/>
</dbReference>
<dbReference type="GO" id="GO:0043565">
    <property type="term" value="F:sequence-specific DNA binding"/>
    <property type="evidence" value="ECO:0000314"/>
    <property type="project" value="EcoCyc"/>
</dbReference>
<dbReference type="GO" id="GO:0006351">
    <property type="term" value="P:DNA-templated transcription"/>
    <property type="evidence" value="ECO:0000314"/>
    <property type="project" value="EcoCyc"/>
</dbReference>
<dbReference type="GO" id="GO:0045893">
    <property type="term" value="P:positive regulation of DNA-templated transcription"/>
    <property type="evidence" value="ECO:0007669"/>
    <property type="project" value="UniProtKB-UniRule"/>
</dbReference>
<dbReference type="GO" id="GO:0019299">
    <property type="term" value="P:rhamnose metabolic process"/>
    <property type="evidence" value="ECO:0007669"/>
    <property type="project" value="UniProtKB-UniRule"/>
</dbReference>
<dbReference type="CDD" id="cd06977">
    <property type="entry name" value="cupin_RhaR_RhaS-like_N"/>
    <property type="match status" value="1"/>
</dbReference>
<dbReference type="Gene3D" id="1.10.10.60">
    <property type="entry name" value="Homeodomain-like"/>
    <property type="match status" value="2"/>
</dbReference>
<dbReference type="Gene3D" id="2.60.120.10">
    <property type="entry name" value="Jelly Rolls"/>
    <property type="match status" value="1"/>
</dbReference>
<dbReference type="HAMAP" id="MF_01533">
    <property type="entry name" value="HTH_type_RhaR"/>
    <property type="match status" value="1"/>
</dbReference>
<dbReference type="InterPro" id="IPR003313">
    <property type="entry name" value="AraC-bd"/>
</dbReference>
<dbReference type="InterPro" id="IPR009057">
    <property type="entry name" value="Homeodomain-like_sf"/>
</dbReference>
<dbReference type="InterPro" id="IPR018060">
    <property type="entry name" value="HTH_AraC"/>
</dbReference>
<dbReference type="InterPro" id="IPR018062">
    <property type="entry name" value="HTH_AraC-typ_CS"/>
</dbReference>
<dbReference type="InterPro" id="IPR047220">
    <property type="entry name" value="RhaR_RhaS-like_N"/>
</dbReference>
<dbReference type="InterPro" id="IPR014710">
    <property type="entry name" value="RmlC-like_jellyroll"/>
</dbReference>
<dbReference type="InterPro" id="IPR011051">
    <property type="entry name" value="RmlC_Cupin_sf"/>
</dbReference>
<dbReference type="InterPro" id="IPR023699">
    <property type="entry name" value="Tscrpt_act_RhaR"/>
</dbReference>
<dbReference type="InterPro" id="IPR020449">
    <property type="entry name" value="Tscrpt_reg_AraC-type_HTH"/>
</dbReference>
<dbReference type="NCBIfam" id="NF010025">
    <property type="entry name" value="PRK13500.1"/>
    <property type="match status" value="1"/>
</dbReference>
<dbReference type="NCBIfam" id="NF010026">
    <property type="entry name" value="PRK13501.1"/>
    <property type="match status" value="1"/>
</dbReference>
<dbReference type="NCBIfam" id="NF010027">
    <property type="entry name" value="PRK13502.1"/>
    <property type="match status" value="1"/>
</dbReference>
<dbReference type="PANTHER" id="PTHR43280">
    <property type="entry name" value="ARAC-FAMILY TRANSCRIPTIONAL REGULATOR"/>
    <property type="match status" value="1"/>
</dbReference>
<dbReference type="PANTHER" id="PTHR43280:SF13">
    <property type="entry name" value="HTH-TYPE TRANSCRIPTIONAL ACTIVATOR RHAR"/>
    <property type="match status" value="1"/>
</dbReference>
<dbReference type="Pfam" id="PF02311">
    <property type="entry name" value="AraC_binding"/>
    <property type="match status" value="1"/>
</dbReference>
<dbReference type="Pfam" id="PF12833">
    <property type="entry name" value="HTH_18"/>
    <property type="match status" value="1"/>
</dbReference>
<dbReference type="PRINTS" id="PR00032">
    <property type="entry name" value="HTHARAC"/>
</dbReference>
<dbReference type="SMART" id="SM00342">
    <property type="entry name" value="HTH_ARAC"/>
    <property type="match status" value="1"/>
</dbReference>
<dbReference type="SUPFAM" id="SSF46689">
    <property type="entry name" value="Homeodomain-like"/>
    <property type="match status" value="2"/>
</dbReference>
<dbReference type="SUPFAM" id="SSF51182">
    <property type="entry name" value="RmlC-like cupins"/>
    <property type="match status" value="1"/>
</dbReference>
<dbReference type="PROSITE" id="PS00041">
    <property type="entry name" value="HTH_ARAC_FAMILY_1"/>
    <property type="match status" value="1"/>
</dbReference>
<dbReference type="PROSITE" id="PS01124">
    <property type="entry name" value="HTH_ARAC_FAMILY_2"/>
    <property type="match status" value="1"/>
</dbReference>
<sequence length="282" mass="32373">MAHQLKLLKDDFFASDQQAVAVADRYPQDVFAEHTHDFCELVIVWRGNGLHVLNDRPYRITRGDLFYIHADDKHSYASVNDLVLQNIIYCPERLKLNLDWQGAIPGFNASAGQPHWRLGSMGMAQARQVIGQLEHESSQHVPFANEMAELLFGQLVMLLNRHRYTSDSLPPTSSETLLDKLITRLAASLKSPFALDKFCDEASCSERVLRQQFRQQTGMTINQYLRQVRVCHAQYLLQHSRLLISDISTECGFEDSNYFSVVFTRETGMTPSQWRHLNSQKD</sequence>
<evidence type="ECO:0000255" key="1">
    <source>
        <dbReference type="HAMAP-Rule" id="MF_01533"/>
    </source>
</evidence>
<evidence type="ECO:0000269" key="2">
    <source>
    </source>
</evidence>
<evidence type="ECO:0000269" key="3">
    <source>
    </source>
</evidence>
<evidence type="ECO:0000305" key="4"/>
<evidence type="ECO:0007829" key="5">
    <source>
        <dbReference type="PDB" id="5U93"/>
    </source>
</evidence>
<accession>P09378</accession>
<accession>Q2M8K3</accession>
<feature type="chain" id="PRO_0000194551" description="HTH-type transcriptional activator RhaR">
    <location>
        <begin position="1"/>
        <end position="282"/>
    </location>
</feature>
<feature type="domain" description="HTH araC/xylS-type" evidence="1">
    <location>
        <begin position="179"/>
        <end position="277"/>
    </location>
</feature>
<feature type="DNA-binding region" description="H-T-H motif" evidence="1">
    <location>
        <begin position="196"/>
        <end position="217"/>
    </location>
</feature>
<feature type="DNA-binding region" description="H-T-H motif" evidence="1">
    <location>
        <begin position="244"/>
        <end position="267"/>
    </location>
</feature>
<feature type="site" description="Interaction with sigma-70" evidence="1">
    <location>
        <position position="246"/>
    </location>
</feature>
<feature type="helix" evidence="5">
    <location>
        <begin position="9"/>
        <end position="12"/>
    </location>
</feature>
<feature type="strand" evidence="5">
    <location>
        <begin position="13"/>
        <end position="15"/>
    </location>
</feature>
<feature type="strand" evidence="5">
    <location>
        <begin position="20"/>
        <end position="25"/>
    </location>
</feature>
<feature type="strand" evidence="5">
    <location>
        <begin position="31"/>
        <end position="34"/>
    </location>
</feature>
<feature type="strand" evidence="5">
    <location>
        <begin position="36"/>
        <end position="53"/>
    </location>
</feature>
<feature type="strand" evidence="5">
    <location>
        <begin position="56"/>
        <end position="61"/>
    </location>
</feature>
<feature type="strand" evidence="5">
    <location>
        <begin position="64"/>
        <end position="68"/>
    </location>
</feature>
<feature type="strand" evidence="5">
    <location>
        <begin position="74"/>
        <end position="89"/>
    </location>
</feature>
<feature type="helix" evidence="5">
    <location>
        <begin position="91"/>
        <end position="93"/>
    </location>
</feature>
<feature type="helix" evidence="5">
    <location>
        <begin position="100"/>
        <end position="103"/>
    </location>
</feature>
<feature type="strand" evidence="5">
    <location>
        <begin position="107"/>
        <end position="110"/>
    </location>
</feature>
<feature type="strand" evidence="5">
    <location>
        <begin position="115"/>
        <end position="117"/>
    </location>
</feature>
<feature type="helix" evidence="5">
    <location>
        <begin position="120"/>
        <end position="135"/>
    </location>
</feature>
<feature type="strand" evidence="5">
    <location>
        <begin position="139"/>
        <end position="141"/>
    </location>
</feature>
<feature type="helix" evidence="5">
    <location>
        <begin position="144"/>
        <end position="162"/>
    </location>
</feature>
<protein>
    <recommendedName>
        <fullName evidence="1">HTH-type transcriptional activator RhaR</fullName>
    </recommendedName>
    <alternativeName>
        <fullName evidence="1">L-rhamnose operon transcriptional activator RhaR</fullName>
    </alternativeName>
</protein>
<gene>
    <name evidence="1" type="primary">rhaR</name>
    <name type="synonym">rhaC1</name>
    <name type="ordered locus">b3906</name>
    <name type="ordered locus">JW3877</name>
</gene>
<organism>
    <name type="scientific">Escherichia coli (strain K12)</name>
    <dbReference type="NCBI Taxonomy" id="83333"/>
    <lineage>
        <taxon>Bacteria</taxon>
        <taxon>Pseudomonadati</taxon>
        <taxon>Pseudomonadota</taxon>
        <taxon>Gammaproteobacteria</taxon>
        <taxon>Enterobacterales</taxon>
        <taxon>Enterobacteriaceae</taxon>
        <taxon>Escherichia</taxon>
    </lineage>
</organism>
<reference key="1">
    <citation type="journal article" date="1987" name="J. Mol. Biol.">
        <title>Positive regulation of the Escherichia coli L-rhamnose operon is mediated by the products of tandemly repeated regulatory genes.</title>
        <authorList>
            <person name="Tobin J.F."/>
            <person name="Schleif R.F."/>
        </authorList>
    </citation>
    <scope>NUCLEOTIDE SEQUENCE [GENOMIC DNA]</scope>
</reference>
<reference key="2">
    <citation type="journal article" date="1993" name="Nucleic Acids Res.">
        <title>Analysis of the Escherichia coli genome. III. DNA sequence of the region from 87.2 to 89.2 minutes.</title>
        <authorList>
            <person name="Plunkett G. III"/>
            <person name="Burland V."/>
            <person name="Daniels D.L."/>
            <person name="Blattner F.R."/>
        </authorList>
    </citation>
    <scope>NUCLEOTIDE SEQUENCE [LARGE SCALE GENOMIC DNA]</scope>
    <source>
        <strain>K12 / MG1655 / ATCC 47076</strain>
    </source>
</reference>
<reference key="3">
    <citation type="journal article" date="1997" name="Science">
        <title>The complete genome sequence of Escherichia coli K-12.</title>
        <authorList>
            <person name="Blattner F.R."/>
            <person name="Plunkett G. III"/>
            <person name="Bloch C.A."/>
            <person name="Perna N.T."/>
            <person name="Burland V."/>
            <person name="Riley M."/>
            <person name="Collado-Vides J."/>
            <person name="Glasner J.D."/>
            <person name="Rode C.K."/>
            <person name="Mayhew G.F."/>
            <person name="Gregor J."/>
            <person name="Davis N.W."/>
            <person name="Kirkpatrick H.A."/>
            <person name="Goeden M.A."/>
            <person name="Rose D.J."/>
            <person name="Mau B."/>
            <person name="Shao Y."/>
        </authorList>
    </citation>
    <scope>NUCLEOTIDE SEQUENCE [LARGE SCALE GENOMIC DNA]</scope>
    <source>
        <strain>K12 / MG1655 / ATCC 47076</strain>
    </source>
</reference>
<reference key="4">
    <citation type="journal article" date="2006" name="Mol. Syst. Biol.">
        <title>Highly accurate genome sequences of Escherichia coli K-12 strains MG1655 and W3110.</title>
        <authorList>
            <person name="Hayashi K."/>
            <person name="Morooka N."/>
            <person name="Yamamoto Y."/>
            <person name="Fujita K."/>
            <person name="Isono K."/>
            <person name="Choi S."/>
            <person name="Ohtsubo E."/>
            <person name="Baba T."/>
            <person name="Wanner B.L."/>
            <person name="Mori H."/>
            <person name="Horiuchi T."/>
        </authorList>
    </citation>
    <scope>NUCLEOTIDE SEQUENCE [LARGE SCALE GENOMIC DNA]</scope>
    <source>
        <strain>K12 / W3110 / ATCC 27325 / DSM 5911</strain>
    </source>
</reference>
<reference key="5">
    <citation type="journal article" date="1992" name="J. Gen. Microbiol.">
        <title>Nucleotide sequence of the rhaR-sodA interval specifying rhaT in Escherichia coli.</title>
        <authorList>
            <person name="Garcia C."/>
            <person name="Baldoma L."/>
            <person name="Badia J."/>
            <person name="Aguilar J."/>
        </authorList>
    </citation>
    <scope>NUCLEOTIDE SEQUENCE [GENOMIC DNA] OF 265-282</scope>
    <source>
        <strain>K12</strain>
    </source>
</reference>
<reference key="6">
    <citation type="journal article" date="1992" name="J. Biol. Chem.">
        <title>Mapping, cloning, expression, and sequencing of the rhaT gene, which encodes a novel L-rhamnose-H+ transport protein in Salmonella typhimurium and Escherichia coli.</title>
        <authorList>
            <person name="Tate C.G."/>
            <person name="Muiry J.A.R."/>
            <person name="Henderson P.J.F."/>
        </authorList>
    </citation>
    <scope>NUCLEOTIDE SEQUENCE [GENOMIC DNA] OF 266-282</scope>
    <source>
        <strain>K12</strain>
    </source>
</reference>
<reference key="7">
    <citation type="journal article" date="1993" name="J. Mol. Biol.">
        <title>A regulatory cascade in the induction of rhaBAD.</title>
        <authorList>
            <person name="Egan S.M."/>
            <person name="Schleif R.F."/>
        </authorList>
    </citation>
    <scope>FUNCTION</scope>
    <scope>INDUCTION</scope>
    <source>
        <strain>ECL116</strain>
    </source>
</reference>
<reference key="8">
    <citation type="journal article" date="1996" name="Microbiology">
        <title>Transcriptional regulation of the Escherichia coli rhaT gene.</title>
        <authorList>
            <person name="Via P."/>
            <person name="Badia J."/>
            <person name="Baldoma L."/>
            <person name="Obradors N."/>
            <person name="Aguilar J."/>
        </authorList>
    </citation>
    <scope>FUNCTION</scope>
</reference>
<reference key="9">
    <citation type="journal article" date="2000" name="J. Bacteriol.">
        <title>Interdependence of activation at rhaSR by cyclic AMP receptor protein, the RNA polymerase alpha subunit C-terminal domain, and rhaR.</title>
        <authorList>
            <person name="Holcroft C.C."/>
            <person name="Egan S.M."/>
        </authorList>
    </citation>
    <scope>REGULATION BY CRP</scope>
</reference>
<reference key="10">
    <citation type="journal article" date="2004" name="J. Bacteriol.">
        <title>Amino acid contacts between sigma 70 domain 4 and the transcription activators RhaS and RhaR.</title>
        <authorList>
            <person name="Wickstrum J.R."/>
            <person name="Egan S.M."/>
        </authorList>
    </citation>
    <scope>INTERACTION WITH SIGMA-70</scope>
</reference>
<proteinExistence type="evidence at protein level"/>
<comment type="function">
    <text evidence="1 2 3">Activates expression of the rhaSR operon in response to L-rhamnose.</text>
</comment>
<comment type="subunit">
    <text evidence="1 4">Binds DNA as a dimer.</text>
</comment>
<comment type="subcellular location">
    <subcellularLocation>
        <location evidence="1">Cytoplasm</location>
    </subcellularLocation>
</comment>
<comment type="induction">
    <text evidence="2">Autoregulated. Binding of the cAMP receptor protein (CRP) is required for full expression.</text>
</comment>
<comment type="miscellaneous">
    <text>Its activity is regulated by L-rhamnose. When this sugar becomes available to the cell, basal-level RhaR binds L-rhamnose and becomes activated.</text>
</comment>
<comment type="sequence caution" evidence="4">
    <conflict type="erroneous translation">
        <sequence resource="EMBL-CDS" id="AAA24530"/>
    </conflict>
    <text>Wrong choice of frame.</text>
</comment>
<comment type="sequence caution" evidence="4">
    <conflict type="erroneous initiation">
        <sequence resource="EMBL-CDS" id="AAB03039"/>
    </conflict>
</comment>
<comment type="sequence caution" evidence="4">
    <conflict type="erroneous initiation">
        <sequence resource="EMBL-CDS" id="BAE77403"/>
    </conflict>
</comment>
<comment type="sequence caution" evidence="4">
    <conflict type="erroneous initiation">
        <sequence resource="EMBL-CDS" id="CAA29453"/>
    </conflict>
</comment>